<protein>
    <recommendedName>
        <fullName evidence="1">Phosphatidylglycerol--prolipoprotein diacylglyceryl transferase</fullName>
        <ecNumber evidence="1">2.5.1.145</ecNumber>
    </recommendedName>
</protein>
<evidence type="ECO:0000255" key="1">
    <source>
        <dbReference type="HAMAP-Rule" id="MF_01147"/>
    </source>
</evidence>
<dbReference type="EC" id="2.5.1.145" evidence="1"/>
<dbReference type="EMBL" id="AE000513">
    <property type="protein sequence ID" value="AAF10385.1"/>
    <property type="molecule type" value="Genomic_DNA"/>
</dbReference>
<dbReference type="PIR" id="D75473">
    <property type="entry name" value="D75473"/>
</dbReference>
<dbReference type="RefSeq" id="NP_294531.1">
    <property type="nucleotide sequence ID" value="NC_001263.1"/>
</dbReference>
<dbReference type="SMR" id="Q9RW62"/>
<dbReference type="FunCoup" id="Q9RW62">
    <property type="interactions" value="252"/>
</dbReference>
<dbReference type="STRING" id="243230.DR_0807"/>
<dbReference type="PaxDb" id="243230-DR_0807"/>
<dbReference type="EnsemblBacteria" id="AAF10385">
    <property type="protein sequence ID" value="AAF10385"/>
    <property type="gene ID" value="DR_0807"/>
</dbReference>
<dbReference type="KEGG" id="dra:DR_0807"/>
<dbReference type="PATRIC" id="fig|243230.17.peg.987"/>
<dbReference type="eggNOG" id="COG0682">
    <property type="taxonomic scope" value="Bacteria"/>
</dbReference>
<dbReference type="HOGENOM" id="CLU_013386_1_1_0"/>
<dbReference type="InParanoid" id="Q9RW62"/>
<dbReference type="OrthoDB" id="871140at2"/>
<dbReference type="UniPathway" id="UPA00664"/>
<dbReference type="Proteomes" id="UP000002524">
    <property type="component" value="Chromosome 1"/>
</dbReference>
<dbReference type="GO" id="GO:0005886">
    <property type="term" value="C:plasma membrane"/>
    <property type="evidence" value="ECO:0000318"/>
    <property type="project" value="GO_Central"/>
</dbReference>
<dbReference type="GO" id="GO:0008961">
    <property type="term" value="F:phosphatidylglycerol-prolipoprotein diacylglyceryl transferase activity"/>
    <property type="evidence" value="ECO:0000318"/>
    <property type="project" value="GO_Central"/>
</dbReference>
<dbReference type="GO" id="GO:0042158">
    <property type="term" value="P:lipoprotein biosynthetic process"/>
    <property type="evidence" value="ECO:0000318"/>
    <property type="project" value="GO_Central"/>
</dbReference>
<dbReference type="HAMAP" id="MF_01147">
    <property type="entry name" value="Lgt"/>
    <property type="match status" value="1"/>
</dbReference>
<dbReference type="InterPro" id="IPR001640">
    <property type="entry name" value="Lgt"/>
</dbReference>
<dbReference type="NCBIfam" id="TIGR00544">
    <property type="entry name" value="lgt"/>
    <property type="match status" value="1"/>
</dbReference>
<dbReference type="NCBIfam" id="NF000784">
    <property type="entry name" value="PRK00052.4-5"/>
    <property type="match status" value="1"/>
</dbReference>
<dbReference type="PANTHER" id="PTHR30589:SF0">
    <property type="entry name" value="PHOSPHATIDYLGLYCEROL--PROLIPOPROTEIN DIACYLGLYCERYL TRANSFERASE"/>
    <property type="match status" value="1"/>
</dbReference>
<dbReference type="PANTHER" id="PTHR30589">
    <property type="entry name" value="PROLIPOPROTEIN DIACYLGLYCERYL TRANSFERASE"/>
    <property type="match status" value="1"/>
</dbReference>
<dbReference type="Pfam" id="PF01790">
    <property type="entry name" value="LGT"/>
    <property type="match status" value="1"/>
</dbReference>
<proteinExistence type="inferred from homology"/>
<sequence length="339" mass="38364">MPRRGPFLALFAGCVSRGASRSPPGHTLTRRPMDPVFLQIGNFTIAWYGVLMMLGIAAGYWLGLKLARERGLNADLFERMILWMLFWGFVGARLVFVLTSWHIFEGIPFPRVLLDIVNLRNGGISIHGGLIGGVLTLIYFARRYRLNFYQYADLAVPGVAFGIIGGRLGNIMNGTDTVGRVTGWPIGYHWPASARAFHEGMCRPNPNPDMDLSKYCHEVGGQIMMTAPVHFTQLYGVIIGIILAVASYFWLKSRVPGWAFWQFWLWYSILRAGWEETFRLNPLTIKTYLNQGLDAPGIGLWTDTQIFSVPLILVSLWMLWRLRQRRQVTVPTVPVQSQS</sequence>
<feature type="chain" id="PRO_0000172593" description="Phosphatidylglycerol--prolipoprotein diacylglyceryl transferase">
    <location>
        <begin position="1"/>
        <end position="339"/>
    </location>
</feature>
<feature type="transmembrane region" description="Helical" evidence="1">
    <location>
        <begin position="43"/>
        <end position="63"/>
    </location>
</feature>
<feature type="transmembrane region" description="Helical" evidence="1">
    <location>
        <begin position="81"/>
        <end position="101"/>
    </location>
</feature>
<feature type="transmembrane region" description="Helical" evidence="1">
    <location>
        <begin position="121"/>
        <end position="141"/>
    </location>
</feature>
<feature type="transmembrane region" description="Helical" evidence="1">
    <location>
        <begin position="231"/>
        <end position="251"/>
    </location>
</feature>
<feature type="transmembrane region" description="Helical" evidence="1">
    <location>
        <begin position="300"/>
        <end position="320"/>
    </location>
</feature>
<feature type="binding site" evidence="1">
    <location>
        <position position="167"/>
    </location>
    <ligand>
        <name>a 1,2-diacyl-sn-glycero-3-phospho-(1'-sn-glycerol)</name>
        <dbReference type="ChEBI" id="CHEBI:64716"/>
    </ligand>
</feature>
<name>LGT_DEIRA</name>
<gene>
    <name evidence="1" type="primary">lgt</name>
    <name type="ordered locus">DR_0807</name>
</gene>
<accession>Q9RW62</accession>
<organism>
    <name type="scientific">Deinococcus radiodurans (strain ATCC 13939 / DSM 20539 / JCM 16871 / CCUG 27074 / LMG 4051 / NBRC 15346 / NCIMB 9279 / VKM B-1422 / R1)</name>
    <dbReference type="NCBI Taxonomy" id="243230"/>
    <lineage>
        <taxon>Bacteria</taxon>
        <taxon>Thermotogati</taxon>
        <taxon>Deinococcota</taxon>
        <taxon>Deinococci</taxon>
        <taxon>Deinococcales</taxon>
        <taxon>Deinococcaceae</taxon>
        <taxon>Deinococcus</taxon>
    </lineage>
</organism>
<reference key="1">
    <citation type="journal article" date="1999" name="Science">
        <title>Genome sequence of the radioresistant bacterium Deinococcus radiodurans R1.</title>
        <authorList>
            <person name="White O."/>
            <person name="Eisen J.A."/>
            <person name="Heidelberg J.F."/>
            <person name="Hickey E.K."/>
            <person name="Peterson J.D."/>
            <person name="Dodson R.J."/>
            <person name="Haft D.H."/>
            <person name="Gwinn M.L."/>
            <person name="Nelson W.C."/>
            <person name="Richardson D.L."/>
            <person name="Moffat K.S."/>
            <person name="Qin H."/>
            <person name="Jiang L."/>
            <person name="Pamphile W."/>
            <person name="Crosby M."/>
            <person name="Shen M."/>
            <person name="Vamathevan J.J."/>
            <person name="Lam P."/>
            <person name="McDonald L.A."/>
            <person name="Utterback T.R."/>
            <person name="Zalewski C."/>
            <person name="Makarova K.S."/>
            <person name="Aravind L."/>
            <person name="Daly M.J."/>
            <person name="Minton K.W."/>
            <person name="Fleischmann R.D."/>
            <person name="Ketchum K.A."/>
            <person name="Nelson K.E."/>
            <person name="Salzberg S.L."/>
            <person name="Smith H.O."/>
            <person name="Venter J.C."/>
            <person name="Fraser C.M."/>
        </authorList>
    </citation>
    <scope>NUCLEOTIDE SEQUENCE [LARGE SCALE GENOMIC DNA]</scope>
    <source>
        <strain>ATCC 13939 / DSM 20539 / JCM 16871 / CCUG 27074 / LMG 4051 / NBRC 15346 / NCIMB 9279 / VKM B-1422 / R1</strain>
    </source>
</reference>
<comment type="function">
    <text evidence="1">Catalyzes the transfer of the diacylglyceryl group from phosphatidylglycerol to the sulfhydryl group of the N-terminal cysteine of a prolipoprotein, the first step in the formation of mature lipoproteins.</text>
</comment>
<comment type="catalytic activity">
    <reaction evidence="1">
        <text>L-cysteinyl-[prolipoprotein] + a 1,2-diacyl-sn-glycero-3-phospho-(1'-sn-glycerol) = an S-1,2-diacyl-sn-glyceryl-L-cysteinyl-[prolipoprotein] + sn-glycerol 1-phosphate + H(+)</text>
        <dbReference type="Rhea" id="RHEA:56712"/>
        <dbReference type="Rhea" id="RHEA-COMP:14679"/>
        <dbReference type="Rhea" id="RHEA-COMP:14680"/>
        <dbReference type="ChEBI" id="CHEBI:15378"/>
        <dbReference type="ChEBI" id="CHEBI:29950"/>
        <dbReference type="ChEBI" id="CHEBI:57685"/>
        <dbReference type="ChEBI" id="CHEBI:64716"/>
        <dbReference type="ChEBI" id="CHEBI:140658"/>
        <dbReference type="EC" id="2.5.1.145"/>
    </reaction>
</comment>
<comment type="pathway">
    <text evidence="1">Protein modification; lipoprotein biosynthesis (diacylglyceryl transfer).</text>
</comment>
<comment type="subcellular location">
    <subcellularLocation>
        <location evidence="1">Cell membrane</location>
        <topology evidence="1">Multi-pass membrane protein</topology>
    </subcellularLocation>
</comment>
<comment type="similarity">
    <text evidence="1">Belongs to the Lgt family.</text>
</comment>
<keyword id="KW-1003">Cell membrane</keyword>
<keyword id="KW-0472">Membrane</keyword>
<keyword id="KW-1185">Reference proteome</keyword>
<keyword id="KW-0808">Transferase</keyword>
<keyword id="KW-0812">Transmembrane</keyword>
<keyword id="KW-1133">Transmembrane helix</keyword>